<reference key="1">
    <citation type="journal article" date="2005" name="Proc. Natl. Acad. Sci. U.S.A.">
        <title>Comparison of the complete genome sequences of Pseudomonas syringae pv. syringae B728a and pv. tomato DC3000.</title>
        <authorList>
            <person name="Feil H."/>
            <person name="Feil W.S."/>
            <person name="Chain P."/>
            <person name="Larimer F."/>
            <person name="Dibartolo G."/>
            <person name="Copeland A."/>
            <person name="Lykidis A."/>
            <person name="Trong S."/>
            <person name="Nolan M."/>
            <person name="Goltsman E."/>
            <person name="Thiel J."/>
            <person name="Malfatti S."/>
            <person name="Loper J.E."/>
            <person name="Lapidus A."/>
            <person name="Detter J.C."/>
            <person name="Land M."/>
            <person name="Richardson P.M."/>
            <person name="Kyrpides N.C."/>
            <person name="Ivanova N."/>
            <person name="Lindow S.E."/>
        </authorList>
    </citation>
    <scope>NUCLEOTIDE SEQUENCE [LARGE SCALE GENOMIC DNA]</scope>
    <source>
        <strain>B728a</strain>
    </source>
</reference>
<proteinExistence type="inferred from homology"/>
<protein>
    <recommendedName>
        <fullName evidence="1">Ribosomal RNA small subunit methyltransferase C</fullName>
        <ecNumber evidence="1">2.1.1.172</ecNumber>
    </recommendedName>
    <alternativeName>
        <fullName evidence="1">16S rRNA m2G1207 methyltransferase</fullName>
    </alternativeName>
    <alternativeName>
        <fullName evidence="1">rRNA (guanine-N(2)-)-methyltransferase RsmC</fullName>
    </alternativeName>
</protein>
<keyword id="KW-0963">Cytoplasm</keyword>
<keyword id="KW-0489">Methyltransferase</keyword>
<keyword id="KW-0698">rRNA processing</keyword>
<keyword id="KW-0949">S-adenosyl-L-methionine</keyword>
<keyword id="KW-0808">Transferase</keyword>
<organism>
    <name type="scientific">Pseudomonas syringae pv. syringae (strain B728a)</name>
    <dbReference type="NCBI Taxonomy" id="205918"/>
    <lineage>
        <taxon>Bacteria</taxon>
        <taxon>Pseudomonadati</taxon>
        <taxon>Pseudomonadota</taxon>
        <taxon>Gammaproteobacteria</taxon>
        <taxon>Pseudomonadales</taxon>
        <taxon>Pseudomonadaceae</taxon>
        <taxon>Pseudomonas</taxon>
        <taxon>Pseudomonas syringae</taxon>
    </lineage>
</organism>
<name>RSMC_PSEU2</name>
<evidence type="ECO:0000255" key="1">
    <source>
        <dbReference type="HAMAP-Rule" id="MF_01862"/>
    </source>
</evidence>
<accession>Q4ZXT0</accession>
<dbReference type="EC" id="2.1.1.172" evidence="1"/>
<dbReference type="EMBL" id="CP000075">
    <property type="protein sequence ID" value="AAY36042.1"/>
    <property type="molecule type" value="Genomic_DNA"/>
</dbReference>
<dbReference type="RefSeq" id="WP_011266753.1">
    <property type="nucleotide sequence ID" value="NC_007005.1"/>
</dbReference>
<dbReference type="RefSeq" id="YP_234080.1">
    <property type="nucleotide sequence ID" value="NC_007005.1"/>
</dbReference>
<dbReference type="SMR" id="Q4ZXT0"/>
<dbReference type="STRING" id="205918.Psyr_0986"/>
<dbReference type="KEGG" id="psb:Psyr_0986"/>
<dbReference type="PATRIC" id="fig|205918.7.peg.1015"/>
<dbReference type="eggNOG" id="COG2813">
    <property type="taxonomic scope" value="Bacteria"/>
</dbReference>
<dbReference type="HOGENOM" id="CLU_049581_0_0_6"/>
<dbReference type="OrthoDB" id="9816072at2"/>
<dbReference type="Proteomes" id="UP000000426">
    <property type="component" value="Chromosome"/>
</dbReference>
<dbReference type="GO" id="GO:0005737">
    <property type="term" value="C:cytoplasm"/>
    <property type="evidence" value="ECO:0007669"/>
    <property type="project" value="UniProtKB-SubCell"/>
</dbReference>
<dbReference type="GO" id="GO:0052914">
    <property type="term" value="F:16S rRNA (guanine(1207)-N(2))-methyltransferase activity"/>
    <property type="evidence" value="ECO:0007669"/>
    <property type="project" value="UniProtKB-EC"/>
</dbReference>
<dbReference type="CDD" id="cd02440">
    <property type="entry name" value="AdoMet_MTases"/>
    <property type="match status" value="1"/>
</dbReference>
<dbReference type="FunFam" id="3.40.50.150:FF:000228">
    <property type="entry name" value="Ribosomal RNA small subunit methyltransferase C"/>
    <property type="match status" value="1"/>
</dbReference>
<dbReference type="FunFam" id="3.40.50.150:FF:000233">
    <property type="entry name" value="Ribosomal RNA small subunit methyltransferase C"/>
    <property type="match status" value="1"/>
</dbReference>
<dbReference type="Gene3D" id="3.40.50.150">
    <property type="entry name" value="Vaccinia Virus protein VP39"/>
    <property type="match status" value="2"/>
</dbReference>
<dbReference type="HAMAP" id="MF_01862">
    <property type="entry name" value="16SrRNA_methyltr_C"/>
    <property type="match status" value="1"/>
</dbReference>
<dbReference type="InterPro" id="IPR013675">
    <property type="entry name" value="Mtase_sm_N"/>
</dbReference>
<dbReference type="InterPro" id="IPR023543">
    <property type="entry name" value="rRNA_ssu_MeTfrase_C"/>
</dbReference>
<dbReference type="InterPro" id="IPR046977">
    <property type="entry name" value="RsmC/RlmG"/>
</dbReference>
<dbReference type="InterPro" id="IPR029063">
    <property type="entry name" value="SAM-dependent_MTases_sf"/>
</dbReference>
<dbReference type="InterPro" id="IPR007848">
    <property type="entry name" value="Small_mtfrase_dom"/>
</dbReference>
<dbReference type="PANTHER" id="PTHR47816">
    <property type="entry name" value="RIBOSOMAL RNA SMALL SUBUNIT METHYLTRANSFERASE C"/>
    <property type="match status" value="1"/>
</dbReference>
<dbReference type="PANTHER" id="PTHR47816:SF4">
    <property type="entry name" value="RIBOSOMAL RNA SMALL SUBUNIT METHYLTRANSFERASE C"/>
    <property type="match status" value="1"/>
</dbReference>
<dbReference type="Pfam" id="PF05175">
    <property type="entry name" value="MTS"/>
    <property type="match status" value="1"/>
</dbReference>
<dbReference type="Pfam" id="PF08468">
    <property type="entry name" value="MTS_N"/>
    <property type="match status" value="1"/>
</dbReference>
<dbReference type="SUPFAM" id="SSF53335">
    <property type="entry name" value="S-adenosyl-L-methionine-dependent methyltransferases"/>
    <property type="match status" value="1"/>
</dbReference>
<comment type="function">
    <text evidence="1">Specifically methylates the guanine in position 1207 of 16S rRNA in the 30S particle.</text>
</comment>
<comment type="catalytic activity">
    <reaction evidence="1">
        <text>guanosine(1207) in 16S rRNA + S-adenosyl-L-methionine = N(2)-methylguanosine(1207) in 16S rRNA + S-adenosyl-L-homocysteine + H(+)</text>
        <dbReference type="Rhea" id="RHEA:42736"/>
        <dbReference type="Rhea" id="RHEA-COMP:10213"/>
        <dbReference type="Rhea" id="RHEA-COMP:10214"/>
        <dbReference type="ChEBI" id="CHEBI:15378"/>
        <dbReference type="ChEBI" id="CHEBI:57856"/>
        <dbReference type="ChEBI" id="CHEBI:59789"/>
        <dbReference type="ChEBI" id="CHEBI:74269"/>
        <dbReference type="ChEBI" id="CHEBI:74481"/>
        <dbReference type="EC" id="2.1.1.172"/>
    </reaction>
</comment>
<comment type="subunit">
    <text evidence="1">Monomer.</text>
</comment>
<comment type="subcellular location">
    <subcellularLocation>
        <location evidence="1">Cytoplasm</location>
    </subcellularLocation>
</comment>
<comment type="similarity">
    <text evidence="1">Belongs to the methyltransferase superfamily. RsmC family.</text>
</comment>
<gene>
    <name evidence="1" type="primary">rsmC</name>
    <name type="ordered locus">Psyr_0986</name>
</gene>
<sequence>MDPRSEVLLRQAELFQGSLLLVGLPADDLLGKLPDARGWCWHAGDQAALDARFEGRVDFGVEAPQTGFEAAVLFLPKARDLTDYLLNALASRLAGRELFLVGEKRGGIEAAAKQLSPFGRARKLDSARHCQLWQVTVEHAPQAVSLDSLARPYQIELQDGPLTVVSLPGVFSHGRLDRGSALLLENIDKLPSGNLLDFGCGAGVLGAAIKRRYPHNEVIMLDVDAFATASSRLTLAANGLQAQVLTGDGIDAAPMGLNTILSNPPFHVGVHTDYMATENLLRKARQHLKSGGELRLVANNFLRYQPLIEEHVGQCEVRAQGNGFKIYSAKRP</sequence>
<feature type="chain" id="PRO_0000369748" description="Ribosomal RNA small subunit methyltransferase C">
    <location>
        <begin position="1"/>
        <end position="332"/>
    </location>
</feature>